<dbReference type="EC" id="6.1.1.4" evidence="1"/>
<dbReference type="EMBL" id="CP000260">
    <property type="protein sequence ID" value="ABF33214.1"/>
    <property type="molecule type" value="Genomic_DNA"/>
</dbReference>
<dbReference type="SMR" id="Q1JIV9"/>
<dbReference type="KEGG" id="sph:MGAS10270_Spy0149"/>
<dbReference type="HOGENOM" id="CLU_004427_0_0_9"/>
<dbReference type="Proteomes" id="UP000002436">
    <property type="component" value="Chromosome"/>
</dbReference>
<dbReference type="GO" id="GO:0005829">
    <property type="term" value="C:cytosol"/>
    <property type="evidence" value="ECO:0007669"/>
    <property type="project" value="TreeGrafter"/>
</dbReference>
<dbReference type="GO" id="GO:0002161">
    <property type="term" value="F:aminoacyl-tRNA deacylase activity"/>
    <property type="evidence" value="ECO:0007669"/>
    <property type="project" value="InterPro"/>
</dbReference>
<dbReference type="GO" id="GO:0005524">
    <property type="term" value="F:ATP binding"/>
    <property type="evidence" value="ECO:0007669"/>
    <property type="project" value="UniProtKB-UniRule"/>
</dbReference>
<dbReference type="GO" id="GO:0004823">
    <property type="term" value="F:leucine-tRNA ligase activity"/>
    <property type="evidence" value="ECO:0007669"/>
    <property type="project" value="UniProtKB-UniRule"/>
</dbReference>
<dbReference type="GO" id="GO:0006429">
    <property type="term" value="P:leucyl-tRNA aminoacylation"/>
    <property type="evidence" value="ECO:0007669"/>
    <property type="project" value="UniProtKB-UniRule"/>
</dbReference>
<dbReference type="CDD" id="cd07958">
    <property type="entry name" value="Anticodon_Ia_Leu_BEm"/>
    <property type="match status" value="1"/>
</dbReference>
<dbReference type="CDD" id="cd00812">
    <property type="entry name" value="LeuRS_core"/>
    <property type="match status" value="1"/>
</dbReference>
<dbReference type="FunFam" id="1.10.730.10:FF:000012">
    <property type="entry name" value="Leucine--tRNA ligase"/>
    <property type="match status" value="1"/>
</dbReference>
<dbReference type="FunFam" id="3.40.50.620:FF:000056">
    <property type="entry name" value="Leucine--tRNA ligase"/>
    <property type="match status" value="1"/>
</dbReference>
<dbReference type="FunFam" id="3.40.50.620:FF:000077">
    <property type="entry name" value="Leucine--tRNA ligase"/>
    <property type="match status" value="1"/>
</dbReference>
<dbReference type="FunFam" id="1.10.730.10:FF:000011">
    <property type="entry name" value="Leucine--tRNA ligase chloroplastic/mitochondrial"/>
    <property type="match status" value="1"/>
</dbReference>
<dbReference type="Gene3D" id="3.40.50.620">
    <property type="entry name" value="HUPs"/>
    <property type="match status" value="2"/>
</dbReference>
<dbReference type="Gene3D" id="1.10.730.10">
    <property type="entry name" value="Isoleucyl-tRNA Synthetase, Domain 1"/>
    <property type="match status" value="1"/>
</dbReference>
<dbReference type="Gene3D" id="3.90.740.10">
    <property type="entry name" value="Valyl/Leucyl/Isoleucyl-tRNA synthetase, editing domain"/>
    <property type="match status" value="1"/>
</dbReference>
<dbReference type="HAMAP" id="MF_00049_B">
    <property type="entry name" value="Leu_tRNA_synth_B"/>
    <property type="match status" value="1"/>
</dbReference>
<dbReference type="InterPro" id="IPR001412">
    <property type="entry name" value="aa-tRNA-synth_I_CS"/>
</dbReference>
<dbReference type="InterPro" id="IPR002300">
    <property type="entry name" value="aa-tRNA-synth_Ia"/>
</dbReference>
<dbReference type="InterPro" id="IPR002302">
    <property type="entry name" value="Leu-tRNA-ligase"/>
</dbReference>
<dbReference type="InterPro" id="IPR025709">
    <property type="entry name" value="Leu_tRNA-synth_edit"/>
</dbReference>
<dbReference type="InterPro" id="IPR013155">
    <property type="entry name" value="M/V/L/I-tRNA-synth_anticd-bd"/>
</dbReference>
<dbReference type="InterPro" id="IPR015413">
    <property type="entry name" value="Methionyl/Leucyl_tRNA_Synth"/>
</dbReference>
<dbReference type="InterPro" id="IPR014729">
    <property type="entry name" value="Rossmann-like_a/b/a_fold"/>
</dbReference>
<dbReference type="InterPro" id="IPR009080">
    <property type="entry name" value="tRNAsynth_Ia_anticodon-bd"/>
</dbReference>
<dbReference type="InterPro" id="IPR009008">
    <property type="entry name" value="Val/Leu/Ile-tRNA-synth_edit"/>
</dbReference>
<dbReference type="NCBIfam" id="TIGR00396">
    <property type="entry name" value="leuS_bact"/>
    <property type="match status" value="1"/>
</dbReference>
<dbReference type="PANTHER" id="PTHR43740:SF2">
    <property type="entry name" value="LEUCINE--TRNA LIGASE, MITOCHONDRIAL"/>
    <property type="match status" value="1"/>
</dbReference>
<dbReference type="PANTHER" id="PTHR43740">
    <property type="entry name" value="LEUCYL-TRNA SYNTHETASE"/>
    <property type="match status" value="1"/>
</dbReference>
<dbReference type="Pfam" id="PF08264">
    <property type="entry name" value="Anticodon_1"/>
    <property type="match status" value="1"/>
</dbReference>
<dbReference type="Pfam" id="PF00133">
    <property type="entry name" value="tRNA-synt_1"/>
    <property type="match status" value="2"/>
</dbReference>
<dbReference type="Pfam" id="PF13603">
    <property type="entry name" value="tRNA-synt_1_2"/>
    <property type="match status" value="1"/>
</dbReference>
<dbReference type="Pfam" id="PF09334">
    <property type="entry name" value="tRNA-synt_1g"/>
    <property type="match status" value="1"/>
</dbReference>
<dbReference type="PRINTS" id="PR00985">
    <property type="entry name" value="TRNASYNTHLEU"/>
</dbReference>
<dbReference type="SUPFAM" id="SSF47323">
    <property type="entry name" value="Anticodon-binding domain of a subclass of class I aminoacyl-tRNA synthetases"/>
    <property type="match status" value="1"/>
</dbReference>
<dbReference type="SUPFAM" id="SSF52374">
    <property type="entry name" value="Nucleotidylyl transferase"/>
    <property type="match status" value="1"/>
</dbReference>
<dbReference type="SUPFAM" id="SSF50677">
    <property type="entry name" value="ValRS/IleRS/LeuRS editing domain"/>
    <property type="match status" value="1"/>
</dbReference>
<dbReference type="PROSITE" id="PS00178">
    <property type="entry name" value="AA_TRNA_LIGASE_I"/>
    <property type="match status" value="1"/>
</dbReference>
<proteinExistence type="inferred from homology"/>
<name>SYL_STRPD</name>
<sequence>MTFYDHTAIEPKWQAFWADNHTFKTGTDASKPKFYALDMFPYPSGAGLHVGHPEGYTATDILSRFKRAQGHNVLHPMGWDAFGLPAEQYAMDTGNDPAEFTAENIANFKRQINALGFSYDWDREVNTTDPNYYKWTQWIFTKLYEKGLAYEAEVPVNWVEELGTAIANEEVLPDGTSERGGYPVVRKPMRQWMLKITAYAERLLEDLEEVDWPESIKDMQRNWIGKSTGANVTFKVKDTDKDFTVFTTRPDTLFGATYAVLAPEHALVDAITTADQAEAVADYKRQASLKSDLARTDLAKEKTGVWTGSYAINPVNGKEMPVWIADYVLASYGTGAIMAVPAHDERDWEFAKQFNLDIIPVLEGGNVEEAAFTEDGLHINSGFLDGLDKASAIAKMVEWLEAEGVGNEKVTYRLRDWLFSRQRYWGEPIPIIHWEDGTSTAVPESELPLVLPVTKDIRPSGTGESPLANVTDWLEVTREDGVKGRRETNTMPQWAGSSWYYLRYIDPHNTEKLADEELLKQWLPVDIYVGGAEHAVLHLLYARFWHKVLYDLGVVPTKEPFQKLFNQGMILGTSYRDSRGALVATDKVEKRDGSFFHVETGEELEQAPAKMSKSLKNVVNPDDVVEQYGADTLRVYEMFMGPLDASIAWSEEGLEGSRKFLDRVYRLITTKEITEENSGALDKVYNETVKAVTEQVDQMKFNTAIAQLMVFVNAANKEDKLFSDYAKGFVQLIAPFAPHLGEELWQALTASGESISYVPWPSYDESKLVENDVEIVVQIKGKVKAKLVVAKDLSREELQEVALANEKVQAEIAGKDIIKVIAVPNKLVNIVIK</sequence>
<reference key="1">
    <citation type="journal article" date="2006" name="Proc. Natl. Acad. Sci. U.S.A.">
        <title>Molecular genetic anatomy of inter- and intraserotype variation in the human bacterial pathogen group A Streptococcus.</title>
        <authorList>
            <person name="Beres S.B."/>
            <person name="Richter E.W."/>
            <person name="Nagiec M.J."/>
            <person name="Sumby P."/>
            <person name="Porcella S.F."/>
            <person name="DeLeo F.R."/>
            <person name="Musser J.M."/>
        </authorList>
    </citation>
    <scope>NUCLEOTIDE SEQUENCE [LARGE SCALE GENOMIC DNA]</scope>
    <source>
        <strain>MGAS10270</strain>
    </source>
</reference>
<feature type="chain" id="PRO_1000009446" description="Leucine--tRNA ligase">
    <location>
        <begin position="1"/>
        <end position="833"/>
    </location>
</feature>
<feature type="short sequence motif" description="'HIGH' region">
    <location>
        <begin position="41"/>
        <end position="52"/>
    </location>
</feature>
<feature type="short sequence motif" description="'KMSKS' region">
    <location>
        <begin position="610"/>
        <end position="614"/>
    </location>
</feature>
<feature type="binding site" evidence="1">
    <location>
        <position position="613"/>
    </location>
    <ligand>
        <name>ATP</name>
        <dbReference type="ChEBI" id="CHEBI:30616"/>
    </ligand>
</feature>
<keyword id="KW-0030">Aminoacyl-tRNA synthetase</keyword>
<keyword id="KW-0067">ATP-binding</keyword>
<keyword id="KW-0963">Cytoplasm</keyword>
<keyword id="KW-0436">Ligase</keyword>
<keyword id="KW-0547">Nucleotide-binding</keyword>
<keyword id="KW-0648">Protein biosynthesis</keyword>
<evidence type="ECO:0000255" key="1">
    <source>
        <dbReference type="HAMAP-Rule" id="MF_00049"/>
    </source>
</evidence>
<accession>Q1JIV9</accession>
<gene>
    <name evidence="1" type="primary">leuS</name>
    <name type="ordered locus">MGAS10270_Spy0149</name>
</gene>
<organism>
    <name type="scientific">Streptococcus pyogenes serotype M2 (strain MGAS10270)</name>
    <dbReference type="NCBI Taxonomy" id="370552"/>
    <lineage>
        <taxon>Bacteria</taxon>
        <taxon>Bacillati</taxon>
        <taxon>Bacillota</taxon>
        <taxon>Bacilli</taxon>
        <taxon>Lactobacillales</taxon>
        <taxon>Streptococcaceae</taxon>
        <taxon>Streptococcus</taxon>
    </lineage>
</organism>
<protein>
    <recommendedName>
        <fullName evidence="1">Leucine--tRNA ligase</fullName>
        <ecNumber evidence="1">6.1.1.4</ecNumber>
    </recommendedName>
    <alternativeName>
        <fullName evidence="1">Leucyl-tRNA synthetase</fullName>
        <shortName evidence="1">LeuRS</shortName>
    </alternativeName>
</protein>
<comment type="catalytic activity">
    <reaction evidence="1">
        <text>tRNA(Leu) + L-leucine + ATP = L-leucyl-tRNA(Leu) + AMP + diphosphate</text>
        <dbReference type="Rhea" id="RHEA:11688"/>
        <dbReference type="Rhea" id="RHEA-COMP:9613"/>
        <dbReference type="Rhea" id="RHEA-COMP:9622"/>
        <dbReference type="ChEBI" id="CHEBI:30616"/>
        <dbReference type="ChEBI" id="CHEBI:33019"/>
        <dbReference type="ChEBI" id="CHEBI:57427"/>
        <dbReference type="ChEBI" id="CHEBI:78442"/>
        <dbReference type="ChEBI" id="CHEBI:78494"/>
        <dbReference type="ChEBI" id="CHEBI:456215"/>
        <dbReference type="EC" id="6.1.1.4"/>
    </reaction>
</comment>
<comment type="subcellular location">
    <subcellularLocation>
        <location evidence="1">Cytoplasm</location>
    </subcellularLocation>
</comment>
<comment type="similarity">
    <text evidence="1">Belongs to the class-I aminoacyl-tRNA synthetase family.</text>
</comment>